<proteinExistence type="inferred from homology"/>
<feature type="chain" id="PRO_0000205820" description="Nicotinate phosphoribosyltransferase">
    <location>
        <begin position="1"/>
        <end position="405"/>
    </location>
</feature>
<feature type="modified residue" description="Phosphohistidine; by autocatalysis" evidence="1">
    <location>
        <position position="230"/>
    </location>
</feature>
<dbReference type="EC" id="6.3.4.21" evidence="1"/>
<dbReference type="EMBL" id="BX640421">
    <property type="protein sequence ID" value="CAE43842.1"/>
    <property type="molecule type" value="Genomic_DNA"/>
</dbReference>
<dbReference type="RefSeq" id="NP_882096.1">
    <property type="nucleotide sequence ID" value="NC_002929.2"/>
</dbReference>
<dbReference type="SMR" id="Q7VTF7"/>
<dbReference type="STRING" id="257313.BP3583"/>
<dbReference type="PaxDb" id="257313-BP3583"/>
<dbReference type="KEGG" id="bpe:BP3583"/>
<dbReference type="PATRIC" id="fig|257313.5.peg.3877"/>
<dbReference type="eggNOG" id="COG1488">
    <property type="taxonomic scope" value="Bacteria"/>
</dbReference>
<dbReference type="HOGENOM" id="CLU_030991_1_0_4"/>
<dbReference type="UniPathway" id="UPA00253">
    <property type="reaction ID" value="UER00457"/>
</dbReference>
<dbReference type="Proteomes" id="UP000002676">
    <property type="component" value="Chromosome"/>
</dbReference>
<dbReference type="GO" id="GO:0005829">
    <property type="term" value="C:cytosol"/>
    <property type="evidence" value="ECO:0007669"/>
    <property type="project" value="TreeGrafter"/>
</dbReference>
<dbReference type="GO" id="GO:0004516">
    <property type="term" value="F:nicotinate phosphoribosyltransferase activity"/>
    <property type="evidence" value="ECO:0007669"/>
    <property type="project" value="UniProtKB-UniRule"/>
</dbReference>
<dbReference type="GO" id="GO:0034355">
    <property type="term" value="P:NAD biosynthetic process via the salvage pathway"/>
    <property type="evidence" value="ECO:0007669"/>
    <property type="project" value="TreeGrafter"/>
</dbReference>
<dbReference type="CDD" id="cd01401">
    <property type="entry name" value="PncB_like"/>
    <property type="match status" value="1"/>
</dbReference>
<dbReference type="Gene3D" id="3.20.140.10">
    <property type="entry name" value="nicotinate phosphoribosyltransferase"/>
    <property type="match status" value="1"/>
</dbReference>
<dbReference type="HAMAP" id="MF_00570">
    <property type="entry name" value="NAPRTase"/>
    <property type="match status" value="1"/>
</dbReference>
<dbReference type="InterPro" id="IPR041525">
    <property type="entry name" value="N/Namide_PRibTrfase"/>
</dbReference>
<dbReference type="InterPro" id="IPR040727">
    <property type="entry name" value="NAPRTase_N"/>
</dbReference>
<dbReference type="InterPro" id="IPR006406">
    <property type="entry name" value="Nic_PRibTrfase"/>
</dbReference>
<dbReference type="InterPro" id="IPR007229">
    <property type="entry name" value="Nic_PRibTrfase-Fam"/>
</dbReference>
<dbReference type="InterPro" id="IPR036068">
    <property type="entry name" value="Nicotinate_pribotase-like_C"/>
</dbReference>
<dbReference type="NCBIfam" id="TIGR01514">
    <property type="entry name" value="NAPRTase"/>
    <property type="match status" value="1"/>
</dbReference>
<dbReference type="NCBIfam" id="NF003704">
    <property type="entry name" value="PRK05321.1"/>
    <property type="match status" value="1"/>
</dbReference>
<dbReference type="PANTHER" id="PTHR11098">
    <property type="entry name" value="NICOTINATE PHOSPHORIBOSYLTRANSFERASE"/>
    <property type="match status" value="1"/>
</dbReference>
<dbReference type="PANTHER" id="PTHR11098:SF1">
    <property type="entry name" value="NICOTINATE PHOSPHORIBOSYLTRANSFERASE"/>
    <property type="match status" value="1"/>
</dbReference>
<dbReference type="Pfam" id="PF04095">
    <property type="entry name" value="NAPRTase"/>
    <property type="match status" value="1"/>
</dbReference>
<dbReference type="Pfam" id="PF17767">
    <property type="entry name" value="NAPRTase_N"/>
    <property type="match status" value="1"/>
</dbReference>
<dbReference type="PIRSF" id="PIRSF000484">
    <property type="entry name" value="NAPRT"/>
    <property type="match status" value="1"/>
</dbReference>
<dbReference type="SUPFAM" id="SSF51690">
    <property type="entry name" value="Nicotinate/Quinolinate PRTase C-terminal domain-like"/>
    <property type="match status" value="1"/>
</dbReference>
<dbReference type="SUPFAM" id="SSF54675">
    <property type="entry name" value="Nicotinate/Quinolinate PRTase N-terminal domain-like"/>
    <property type="match status" value="1"/>
</dbReference>
<accession>Q7VTF7</accession>
<keyword id="KW-0436">Ligase</keyword>
<keyword id="KW-0597">Phosphoprotein</keyword>
<keyword id="KW-0662">Pyridine nucleotide biosynthesis</keyword>
<keyword id="KW-1185">Reference proteome</keyword>
<organism>
    <name type="scientific">Bordetella pertussis (strain Tohama I / ATCC BAA-589 / NCTC 13251)</name>
    <dbReference type="NCBI Taxonomy" id="257313"/>
    <lineage>
        <taxon>Bacteria</taxon>
        <taxon>Pseudomonadati</taxon>
        <taxon>Pseudomonadota</taxon>
        <taxon>Betaproteobacteria</taxon>
        <taxon>Burkholderiales</taxon>
        <taxon>Alcaligenaceae</taxon>
        <taxon>Bordetella</taxon>
    </lineage>
</organism>
<reference key="1">
    <citation type="journal article" date="2003" name="Nat. Genet.">
        <title>Comparative analysis of the genome sequences of Bordetella pertussis, Bordetella parapertussis and Bordetella bronchiseptica.</title>
        <authorList>
            <person name="Parkhill J."/>
            <person name="Sebaihia M."/>
            <person name="Preston A."/>
            <person name="Murphy L.D."/>
            <person name="Thomson N.R."/>
            <person name="Harris D.E."/>
            <person name="Holden M.T.G."/>
            <person name="Churcher C.M."/>
            <person name="Bentley S.D."/>
            <person name="Mungall K.L."/>
            <person name="Cerdeno-Tarraga A.-M."/>
            <person name="Temple L."/>
            <person name="James K.D."/>
            <person name="Harris B."/>
            <person name="Quail M.A."/>
            <person name="Achtman M."/>
            <person name="Atkin R."/>
            <person name="Baker S."/>
            <person name="Basham D."/>
            <person name="Bason N."/>
            <person name="Cherevach I."/>
            <person name="Chillingworth T."/>
            <person name="Collins M."/>
            <person name="Cronin A."/>
            <person name="Davis P."/>
            <person name="Doggett J."/>
            <person name="Feltwell T."/>
            <person name="Goble A."/>
            <person name="Hamlin N."/>
            <person name="Hauser H."/>
            <person name="Holroyd S."/>
            <person name="Jagels K."/>
            <person name="Leather S."/>
            <person name="Moule S."/>
            <person name="Norberczak H."/>
            <person name="O'Neil S."/>
            <person name="Ormond D."/>
            <person name="Price C."/>
            <person name="Rabbinowitsch E."/>
            <person name="Rutter S."/>
            <person name="Sanders M."/>
            <person name="Saunders D."/>
            <person name="Seeger K."/>
            <person name="Sharp S."/>
            <person name="Simmonds M."/>
            <person name="Skelton J."/>
            <person name="Squares R."/>
            <person name="Squares S."/>
            <person name="Stevens K."/>
            <person name="Unwin L."/>
            <person name="Whitehead S."/>
            <person name="Barrell B.G."/>
            <person name="Maskell D.J."/>
        </authorList>
    </citation>
    <scope>NUCLEOTIDE SEQUENCE [LARGE SCALE GENOMIC DNA]</scope>
    <source>
        <strain>Tohama I / ATCC BAA-589 / NCTC 13251</strain>
    </source>
</reference>
<protein>
    <recommendedName>
        <fullName evidence="1">Nicotinate phosphoribosyltransferase</fullName>
        <shortName evidence="1">NAPRTase</shortName>
        <ecNumber evidence="1">6.3.4.21</ecNumber>
    </recommendedName>
</protein>
<sequence length="405" mass="46657">MVCRNVSRQQFRAIMIITSLLDTDLYKFSMMQVVLHHFPAAQVEYRYKCRTPGINLRPYLDEIRAEVHELCQLRFTSEELDYLRGLRFIKSDFVDFLGLFHLPERCIFIGEGEQPGEISITVKGPWLHTILFEIPVLAIVNEVYFRNTRRNPDWEEGRKRLQSKMNLVLDDPALADFRVAEYGTRRRFSKVWHEEIVSTMKARMGVHFAGTSNVLLAMRHGVLPLGTMGHEYLQACQALGPRLRDSQVFALEVWAKEYRGDLGIALSDVYGMDAFLRDFDMYFCKLFDGARHDSGDPFVWGERLLEHYRTNRADPRAKTLVFSDSLTFPRAIELARQFAGRCKVSFGIGTNLTNDLGHEPLQIVMKMVRCNGQPVAKVSDAPEKTMCDDPAYLAYLRQVFQLPPA</sequence>
<comment type="function">
    <text evidence="1">Catalyzes the synthesis of beta-nicotinate D-ribonucleotide from nicotinate and 5-phospho-D-ribose 1-phosphate at the expense of ATP.</text>
</comment>
<comment type="catalytic activity">
    <reaction evidence="1">
        <text>nicotinate + 5-phospho-alpha-D-ribose 1-diphosphate + ATP + H2O = nicotinate beta-D-ribonucleotide + ADP + phosphate + diphosphate</text>
        <dbReference type="Rhea" id="RHEA:36163"/>
        <dbReference type="ChEBI" id="CHEBI:15377"/>
        <dbReference type="ChEBI" id="CHEBI:30616"/>
        <dbReference type="ChEBI" id="CHEBI:32544"/>
        <dbReference type="ChEBI" id="CHEBI:33019"/>
        <dbReference type="ChEBI" id="CHEBI:43474"/>
        <dbReference type="ChEBI" id="CHEBI:57502"/>
        <dbReference type="ChEBI" id="CHEBI:58017"/>
        <dbReference type="ChEBI" id="CHEBI:456216"/>
        <dbReference type="EC" id="6.3.4.21"/>
    </reaction>
</comment>
<comment type="pathway">
    <text evidence="1">Cofactor biosynthesis; NAD(+) biosynthesis; nicotinate D-ribonucleotide from nicotinate: step 1/1.</text>
</comment>
<comment type="PTM">
    <text evidence="1">Transiently phosphorylated on a His residue during the reaction cycle. Phosphorylation strongly increases the affinity for substrates and increases the rate of nicotinate D-ribonucleotide production. Dephosphorylation regenerates the low-affinity form of the enzyme, leading to product release.</text>
</comment>
<comment type="similarity">
    <text evidence="1">Belongs to the NAPRTase family.</text>
</comment>
<evidence type="ECO:0000255" key="1">
    <source>
        <dbReference type="HAMAP-Rule" id="MF_00570"/>
    </source>
</evidence>
<gene>
    <name evidence="1" type="primary">pncB</name>
    <name type="ordered locus">BP3583</name>
</gene>
<name>PNCB_BORPE</name>